<comment type="catalytic activity">
    <reaction>
        <text>ATP + H2O = ADP + phosphate + H(+)</text>
        <dbReference type="Rhea" id="RHEA:13065"/>
        <dbReference type="ChEBI" id="CHEBI:15377"/>
        <dbReference type="ChEBI" id="CHEBI:15378"/>
        <dbReference type="ChEBI" id="CHEBI:30616"/>
        <dbReference type="ChEBI" id="CHEBI:43474"/>
        <dbReference type="ChEBI" id="CHEBI:456216"/>
    </reaction>
</comment>
<comment type="subcellular location">
    <subcellularLocation>
        <location evidence="1">Cell membrane</location>
        <topology evidence="1">Multi-pass membrane protein</topology>
    </subcellularLocation>
</comment>
<comment type="similarity">
    <text evidence="4">Belongs to the cation transport ATPase (P-type) (TC 3.A.3) family. Type IB subfamily.</text>
</comment>
<organism>
    <name type="scientific">Mycobacterium bovis (strain ATCC BAA-935 / AF2122/97)</name>
    <dbReference type="NCBI Taxonomy" id="233413"/>
    <lineage>
        <taxon>Bacteria</taxon>
        <taxon>Bacillati</taxon>
        <taxon>Actinomycetota</taxon>
        <taxon>Actinomycetes</taxon>
        <taxon>Mycobacteriales</taxon>
        <taxon>Mycobacteriaceae</taxon>
        <taxon>Mycobacterium</taxon>
        <taxon>Mycobacterium tuberculosis complex</taxon>
    </lineage>
</organism>
<proteinExistence type="inferred from homology"/>
<reference key="1">
    <citation type="journal article" date="2003" name="Proc. Natl. Acad. Sci. U.S.A.">
        <title>The complete genome sequence of Mycobacterium bovis.</title>
        <authorList>
            <person name="Garnier T."/>
            <person name="Eiglmeier K."/>
            <person name="Camus J.-C."/>
            <person name="Medina N."/>
            <person name="Mansoor H."/>
            <person name="Pryor M."/>
            <person name="Duthoy S."/>
            <person name="Grondin S."/>
            <person name="Lacroix C."/>
            <person name="Monsempe C."/>
            <person name="Simon S."/>
            <person name="Harris B."/>
            <person name="Atkin R."/>
            <person name="Doggett J."/>
            <person name="Mayes R."/>
            <person name="Keating L."/>
            <person name="Wheeler P.R."/>
            <person name="Parkhill J."/>
            <person name="Barrell B.G."/>
            <person name="Cole S.T."/>
            <person name="Gordon S.V."/>
            <person name="Hewinson R.G."/>
        </authorList>
    </citation>
    <scope>NUCLEOTIDE SEQUENCE [LARGE SCALE GENOMIC DNA]</scope>
    <source>
        <strain>ATCC BAA-935 / AF2122/97</strain>
    </source>
</reference>
<reference key="2">
    <citation type="journal article" date="2017" name="Genome Announc.">
        <title>Updated reference genome sequence and annotation of Mycobacterium bovis AF2122/97.</title>
        <authorList>
            <person name="Malone K.M."/>
            <person name="Farrell D."/>
            <person name="Stuber T.P."/>
            <person name="Schubert O.T."/>
            <person name="Aebersold R."/>
            <person name="Robbe-Austerman S."/>
            <person name="Gordon S.V."/>
        </authorList>
    </citation>
    <scope>NUCLEOTIDE SEQUENCE [LARGE SCALE GENOMIC DNA]</scope>
    <scope>GENOME REANNOTATION</scope>
    <source>
        <strain>ATCC BAA-935 / AF2122/97</strain>
    </source>
</reference>
<gene>
    <name type="primary">ctpB</name>
    <name type="ordered locus">BQ2027_MB0106C</name>
</gene>
<evidence type="ECO:0000250" key="1"/>
<evidence type="ECO:0000255" key="2"/>
<evidence type="ECO:0000255" key="3">
    <source>
        <dbReference type="PROSITE-ProRule" id="PRU00280"/>
    </source>
</evidence>
<evidence type="ECO:0000305" key="4"/>
<accession>P59947</accession>
<accession>A0A1R3XWH7</accession>
<accession>X2BE13</accession>
<feature type="chain" id="PRO_0000046166" description="Cation-transporting P-type ATPase B">
    <location>
        <begin position="1"/>
        <end position="752"/>
    </location>
</feature>
<feature type="transmembrane region" description="Helical" evidence="2">
    <location>
        <begin position="105"/>
        <end position="125"/>
    </location>
</feature>
<feature type="transmembrane region" description="Helical" evidence="2">
    <location>
        <begin position="132"/>
        <end position="152"/>
    </location>
</feature>
<feature type="transmembrane region" description="Helical" evidence="2">
    <location>
        <begin position="167"/>
        <end position="187"/>
    </location>
</feature>
<feature type="transmembrane region" description="Helical" evidence="2">
    <location>
        <begin position="201"/>
        <end position="221"/>
    </location>
</feature>
<feature type="transmembrane region" description="Helical" evidence="2">
    <location>
        <begin position="361"/>
        <end position="381"/>
    </location>
</feature>
<feature type="transmembrane region" description="Helical" evidence="2">
    <location>
        <begin position="390"/>
        <end position="410"/>
    </location>
</feature>
<feature type="transmembrane region" description="Helical" evidence="2">
    <location>
        <begin position="714"/>
        <end position="734"/>
    </location>
</feature>
<feature type="domain" description="HMA" evidence="3">
    <location>
        <begin position="15"/>
        <end position="78"/>
    </location>
</feature>
<feature type="active site" description="4-aspartylphosphate intermediate" evidence="1">
    <location>
        <position position="446"/>
    </location>
</feature>
<feature type="binding site" evidence="3">
    <location>
        <position position="26"/>
    </location>
    <ligand>
        <name>a metal cation</name>
        <dbReference type="ChEBI" id="CHEBI:25213"/>
    </ligand>
</feature>
<feature type="binding site" evidence="3">
    <location>
        <position position="29"/>
    </location>
    <ligand>
        <name>a metal cation</name>
        <dbReference type="ChEBI" id="CHEBI:25213"/>
    </ligand>
</feature>
<dbReference type="EC" id="7.2.2.-"/>
<dbReference type="EMBL" id="LT708304">
    <property type="protein sequence ID" value="SIT98513.1"/>
    <property type="molecule type" value="Genomic_DNA"/>
</dbReference>
<dbReference type="RefSeq" id="NP_853774.1">
    <property type="nucleotide sequence ID" value="NC_002945.3"/>
</dbReference>
<dbReference type="RefSeq" id="WP_003400797.1">
    <property type="nucleotide sequence ID" value="NC_002945.4"/>
</dbReference>
<dbReference type="SMR" id="P59947"/>
<dbReference type="PATRIC" id="fig|233413.5.peg.118"/>
<dbReference type="Proteomes" id="UP000001419">
    <property type="component" value="Chromosome"/>
</dbReference>
<dbReference type="GO" id="GO:0005886">
    <property type="term" value="C:plasma membrane"/>
    <property type="evidence" value="ECO:0007669"/>
    <property type="project" value="UniProtKB-SubCell"/>
</dbReference>
<dbReference type="GO" id="GO:0005524">
    <property type="term" value="F:ATP binding"/>
    <property type="evidence" value="ECO:0007669"/>
    <property type="project" value="UniProtKB-KW"/>
</dbReference>
<dbReference type="GO" id="GO:0016887">
    <property type="term" value="F:ATP hydrolysis activity"/>
    <property type="evidence" value="ECO:0007669"/>
    <property type="project" value="InterPro"/>
</dbReference>
<dbReference type="GO" id="GO:0005507">
    <property type="term" value="F:copper ion binding"/>
    <property type="evidence" value="ECO:0007669"/>
    <property type="project" value="TreeGrafter"/>
</dbReference>
<dbReference type="GO" id="GO:0043682">
    <property type="term" value="F:P-type divalent copper transporter activity"/>
    <property type="evidence" value="ECO:0007669"/>
    <property type="project" value="TreeGrafter"/>
</dbReference>
<dbReference type="GO" id="GO:0055070">
    <property type="term" value="P:copper ion homeostasis"/>
    <property type="evidence" value="ECO:0007669"/>
    <property type="project" value="TreeGrafter"/>
</dbReference>
<dbReference type="CDD" id="cd00371">
    <property type="entry name" value="HMA"/>
    <property type="match status" value="1"/>
</dbReference>
<dbReference type="FunFam" id="3.30.70.100:FF:000005">
    <property type="entry name" value="Copper-exporting P-type ATPase A"/>
    <property type="match status" value="1"/>
</dbReference>
<dbReference type="FunFam" id="2.70.150.10:FF:000002">
    <property type="entry name" value="Copper-transporting ATPase 1, putative"/>
    <property type="match status" value="1"/>
</dbReference>
<dbReference type="Gene3D" id="3.30.70.100">
    <property type="match status" value="1"/>
</dbReference>
<dbReference type="Gene3D" id="3.40.1110.10">
    <property type="entry name" value="Calcium-transporting ATPase, cytoplasmic domain N"/>
    <property type="match status" value="1"/>
</dbReference>
<dbReference type="Gene3D" id="2.70.150.10">
    <property type="entry name" value="Calcium-transporting ATPase, cytoplasmic transduction domain A"/>
    <property type="match status" value="1"/>
</dbReference>
<dbReference type="Gene3D" id="3.40.50.1000">
    <property type="entry name" value="HAD superfamily/HAD-like"/>
    <property type="match status" value="1"/>
</dbReference>
<dbReference type="InterPro" id="IPR023299">
    <property type="entry name" value="ATPase_P-typ_cyto_dom_N"/>
</dbReference>
<dbReference type="InterPro" id="IPR018303">
    <property type="entry name" value="ATPase_P-typ_P_site"/>
</dbReference>
<dbReference type="InterPro" id="IPR023298">
    <property type="entry name" value="ATPase_P-typ_TM_dom_sf"/>
</dbReference>
<dbReference type="InterPro" id="IPR008250">
    <property type="entry name" value="ATPase_P-typ_transduc_dom_A_sf"/>
</dbReference>
<dbReference type="InterPro" id="IPR000579">
    <property type="entry name" value="Cation-trans_P-type_ATPase_A/B"/>
</dbReference>
<dbReference type="InterPro" id="IPR036412">
    <property type="entry name" value="HAD-like_sf"/>
</dbReference>
<dbReference type="InterPro" id="IPR023214">
    <property type="entry name" value="HAD_sf"/>
</dbReference>
<dbReference type="InterPro" id="IPR017969">
    <property type="entry name" value="Heavy-metal-associated_CS"/>
</dbReference>
<dbReference type="InterPro" id="IPR006121">
    <property type="entry name" value="HMA_dom"/>
</dbReference>
<dbReference type="InterPro" id="IPR036163">
    <property type="entry name" value="HMA_dom_sf"/>
</dbReference>
<dbReference type="InterPro" id="IPR027256">
    <property type="entry name" value="P-typ_ATPase_IB"/>
</dbReference>
<dbReference type="InterPro" id="IPR001757">
    <property type="entry name" value="P_typ_ATPase"/>
</dbReference>
<dbReference type="InterPro" id="IPR044492">
    <property type="entry name" value="P_typ_ATPase_HD_dom"/>
</dbReference>
<dbReference type="NCBIfam" id="TIGR01511">
    <property type="entry name" value="ATPase-IB1_Cu"/>
    <property type="match status" value="1"/>
</dbReference>
<dbReference type="NCBIfam" id="TIGR01525">
    <property type="entry name" value="ATPase-IB_hvy"/>
    <property type="match status" value="1"/>
</dbReference>
<dbReference type="NCBIfam" id="TIGR01494">
    <property type="entry name" value="ATPase_P-type"/>
    <property type="match status" value="2"/>
</dbReference>
<dbReference type="PANTHER" id="PTHR43520">
    <property type="entry name" value="ATP7, ISOFORM B"/>
    <property type="match status" value="1"/>
</dbReference>
<dbReference type="PANTHER" id="PTHR43520:SF8">
    <property type="entry name" value="P-TYPE CU(+) TRANSPORTER"/>
    <property type="match status" value="1"/>
</dbReference>
<dbReference type="Pfam" id="PF00122">
    <property type="entry name" value="E1-E2_ATPase"/>
    <property type="match status" value="1"/>
</dbReference>
<dbReference type="Pfam" id="PF00403">
    <property type="entry name" value="HMA"/>
    <property type="match status" value="1"/>
</dbReference>
<dbReference type="Pfam" id="PF00702">
    <property type="entry name" value="Hydrolase"/>
    <property type="match status" value="1"/>
</dbReference>
<dbReference type="PRINTS" id="PR00119">
    <property type="entry name" value="CATATPASE"/>
</dbReference>
<dbReference type="PRINTS" id="PR00940">
    <property type="entry name" value="CATPATPASEA"/>
</dbReference>
<dbReference type="SFLD" id="SFLDS00003">
    <property type="entry name" value="Haloacid_Dehalogenase"/>
    <property type="match status" value="1"/>
</dbReference>
<dbReference type="SFLD" id="SFLDF00027">
    <property type="entry name" value="p-type_atpase"/>
    <property type="match status" value="1"/>
</dbReference>
<dbReference type="SUPFAM" id="SSF81653">
    <property type="entry name" value="Calcium ATPase, transduction domain A"/>
    <property type="match status" value="1"/>
</dbReference>
<dbReference type="SUPFAM" id="SSF81665">
    <property type="entry name" value="Calcium ATPase, transmembrane domain M"/>
    <property type="match status" value="1"/>
</dbReference>
<dbReference type="SUPFAM" id="SSF56784">
    <property type="entry name" value="HAD-like"/>
    <property type="match status" value="1"/>
</dbReference>
<dbReference type="SUPFAM" id="SSF55008">
    <property type="entry name" value="HMA, heavy metal-associated domain"/>
    <property type="match status" value="1"/>
</dbReference>
<dbReference type="PROSITE" id="PS00154">
    <property type="entry name" value="ATPASE_E1_E2"/>
    <property type="match status" value="1"/>
</dbReference>
<dbReference type="PROSITE" id="PS01047">
    <property type="entry name" value="HMA_1"/>
    <property type="match status" value="1"/>
</dbReference>
<dbReference type="PROSITE" id="PS50846">
    <property type="entry name" value="HMA_2"/>
    <property type="match status" value="1"/>
</dbReference>
<keyword id="KW-0067">ATP-binding</keyword>
<keyword id="KW-1003">Cell membrane</keyword>
<keyword id="KW-0460">Magnesium</keyword>
<keyword id="KW-0472">Membrane</keyword>
<keyword id="KW-0479">Metal-binding</keyword>
<keyword id="KW-0547">Nucleotide-binding</keyword>
<keyword id="KW-0597">Phosphoprotein</keyword>
<keyword id="KW-1185">Reference proteome</keyword>
<keyword id="KW-1278">Translocase</keyword>
<keyword id="KW-0812">Transmembrane</keyword>
<keyword id="KW-1133">Transmembrane helix</keyword>
<protein>
    <recommendedName>
        <fullName>Cation-transporting P-type ATPase B</fullName>
        <ecNumber>7.2.2.-</ecNumber>
    </recommendedName>
</protein>
<sequence length="752" mass="77483">MAAPVVGDADLQSVRRIRLDVSGMSCAACASRVETKLNKIPGVRASVNFATRVATIDAVGMAADELCGVVEKAGYHAAPHTETTVLDKRTKDPDGAHARRLLRRLLVAAVLFVPLADLSTLFAIVPSARVPGWGYILTALAAPVVTWAAWPFHSVALRNARHRTTSMETLISVGIVAATAWSLSSVFGDQPPREGSGIWRAILNSDSIYLEVAAGVTVFVLAGRYFEARAKSKAGSALRALAELGAKNVAVLLPDGAELVIPASELKKRQRFVTRPGETIAADGVVVDGSAAIDMSAMTGEAKPVRAYPAASVVGGTVVMDGRLVIEATAVGADTQFAAMVRLVEQAQTQKARAQRLADHIAGVFVPVVFVIAGLAGAAWLVSGAGADRAFSVTLGVLVIACPCALGLATPTAMMVASGRGAQLGIFIKGYRALETIRSIDTVVFDKTGTLTVGQLAVSTVTMAGSGTSERDREEVLGLAAAVESASEHAMAAAIVAASPDPGPVNGFVAVAGCGVSGEVGGHHVEVGKPSWITRTTPCHDAALVSARLDGESRGETVVFVSVDGVVRAALTIADTLKDSAAAAVAALRSRGLRTILLTGDNRAAADAVAAQVGIDSAVADMLPEGKVDVIQRLREEGHTVAMVGDGINDGPALVGADLGLAIGRGTDVALGAADIILVRDDLNTVPQALDLARATMRTIRMNMIWAFGYNVAAIPIAAAGLLNPLIAGAAMAFSSFFVVSNSLRLRNFGAQ</sequence>
<name>CTPB_MYCBO</name>